<comment type="function">
    <text evidence="1">Catalyzes the proton-dependent transport of sialic acid.</text>
</comment>
<comment type="catalytic activity">
    <reaction evidence="1">
        <text>N-acetylneuraminate(in) + H(+)(in) = N-acetylneuraminate(out) + H(+)(out)</text>
        <dbReference type="Rhea" id="RHEA:28987"/>
        <dbReference type="ChEBI" id="CHEBI:15378"/>
        <dbReference type="ChEBI" id="CHEBI:35418"/>
    </reaction>
</comment>
<comment type="subcellular location">
    <subcellularLocation>
        <location evidence="1">Cell inner membrane</location>
        <topology evidence="1">Multi-pass membrane protein</topology>
    </subcellularLocation>
</comment>
<comment type="similarity">
    <text evidence="1">Belongs to the major facilitator superfamily. Sialate:H(+) symporter (SHS) (TC 2.A.1.12) family.</text>
</comment>
<organism>
    <name type="scientific">Cronobacter sakazakii (strain ATCC BAA-894)</name>
    <name type="common">Enterobacter sakazakii</name>
    <dbReference type="NCBI Taxonomy" id="290339"/>
    <lineage>
        <taxon>Bacteria</taxon>
        <taxon>Pseudomonadati</taxon>
        <taxon>Pseudomonadota</taxon>
        <taxon>Gammaproteobacteria</taxon>
        <taxon>Enterobacterales</taxon>
        <taxon>Enterobacteriaceae</taxon>
        <taxon>Cronobacter</taxon>
    </lineage>
</organism>
<reference key="1">
    <citation type="journal article" date="2010" name="PLoS ONE">
        <title>Genome sequence of Cronobacter sakazakii BAA-894 and comparative genomic hybridization analysis with other Cronobacter species.</title>
        <authorList>
            <person name="Kucerova E."/>
            <person name="Clifton S.W."/>
            <person name="Xia X.Q."/>
            <person name="Long F."/>
            <person name="Porwollik S."/>
            <person name="Fulton L."/>
            <person name="Fronick C."/>
            <person name="Minx P."/>
            <person name="Kyung K."/>
            <person name="Warren W."/>
            <person name="Fulton R."/>
            <person name="Feng D."/>
            <person name="Wollam A."/>
            <person name="Shah N."/>
            <person name="Bhonagiri V."/>
            <person name="Nash W.E."/>
            <person name="Hallsworth-Pepin K."/>
            <person name="Wilson R.K."/>
            <person name="McClelland M."/>
            <person name="Forsythe S.J."/>
        </authorList>
    </citation>
    <scope>NUCLEOTIDE SEQUENCE [LARGE SCALE GENOMIC DNA]</scope>
    <source>
        <strain>ATCC BAA-894</strain>
    </source>
</reference>
<gene>
    <name evidence="1" type="primary">nanT</name>
    <name type="ordered locus">ESA_03611</name>
</gene>
<dbReference type="EMBL" id="CP000783">
    <property type="protein sequence ID" value="ABU78821.1"/>
    <property type="molecule type" value="Genomic_DNA"/>
</dbReference>
<dbReference type="RefSeq" id="WP_012125979.1">
    <property type="nucleotide sequence ID" value="NC_009778.1"/>
</dbReference>
<dbReference type="SMR" id="A7MJD1"/>
<dbReference type="KEGG" id="esa:ESA_03611"/>
<dbReference type="PATRIC" id="fig|290339.8.peg.3215"/>
<dbReference type="HOGENOM" id="CLU_001265_46_8_6"/>
<dbReference type="Proteomes" id="UP000000260">
    <property type="component" value="Chromosome"/>
</dbReference>
<dbReference type="GO" id="GO:0005886">
    <property type="term" value="C:plasma membrane"/>
    <property type="evidence" value="ECO:0007669"/>
    <property type="project" value="UniProtKB-SubCell"/>
</dbReference>
<dbReference type="GO" id="GO:0046943">
    <property type="term" value="F:carboxylic acid transmembrane transporter activity"/>
    <property type="evidence" value="ECO:0007669"/>
    <property type="project" value="TreeGrafter"/>
</dbReference>
<dbReference type="GO" id="GO:0015538">
    <property type="term" value="F:sialic acid:proton symporter activity"/>
    <property type="evidence" value="ECO:0007669"/>
    <property type="project" value="UniProtKB-UniRule"/>
</dbReference>
<dbReference type="CDD" id="cd17316">
    <property type="entry name" value="MFS_SV2_like"/>
    <property type="match status" value="1"/>
</dbReference>
<dbReference type="FunFam" id="1.20.1250.20:FF:000027">
    <property type="entry name" value="Sialic acid transporter NanT"/>
    <property type="match status" value="1"/>
</dbReference>
<dbReference type="FunFam" id="1.20.1250.20:FF:000038">
    <property type="entry name" value="Sialic acid transporter NanT"/>
    <property type="match status" value="1"/>
</dbReference>
<dbReference type="Gene3D" id="1.20.1250.20">
    <property type="entry name" value="MFS general substrate transporter like domains"/>
    <property type="match status" value="2"/>
</dbReference>
<dbReference type="HAMAP" id="MF_01238">
    <property type="entry name" value="MFS_NanT"/>
    <property type="match status" value="1"/>
</dbReference>
<dbReference type="InterPro" id="IPR011701">
    <property type="entry name" value="MFS"/>
</dbReference>
<dbReference type="InterPro" id="IPR020846">
    <property type="entry name" value="MFS_dom"/>
</dbReference>
<dbReference type="InterPro" id="IPR036259">
    <property type="entry name" value="MFS_trans_sf"/>
</dbReference>
<dbReference type="InterPro" id="IPR004742">
    <property type="entry name" value="SA_transporter"/>
</dbReference>
<dbReference type="NCBIfam" id="TIGR00891">
    <property type="entry name" value="2A0112"/>
    <property type="match status" value="1"/>
</dbReference>
<dbReference type="NCBIfam" id="NF003024">
    <property type="entry name" value="PRK03893.1"/>
    <property type="match status" value="1"/>
</dbReference>
<dbReference type="PANTHER" id="PTHR23508">
    <property type="entry name" value="CARBOXYLIC ACID TRANSPORTER PROTEIN HOMOLOG"/>
    <property type="match status" value="1"/>
</dbReference>
<dbReference type="PANTHER" id="PTHR23508:SF3">
    <property type="entry name" value="SIALIC ACID TRANSPORTER NANT"/>
    <property type="match status" value="1"/>
</dbReference>
<dbReference type="Pfam" id="PF07690">
    <property type="entry name" value="MFS_1"/>
    <property type="match status" value="1"/>
</dbReference>
<dbReference type="SUPFAM" id="SSF103473">
    <property type="entry name" value="MFS general substrate transporter"/>
    <property type="match status" value="1"/>
</dbReference>
<dbReference type="PROSITE" id="PS50850">
    <property type="entry name" value="MFS"/>
    <property type="match status" value="1"/>
</dbReference>
<protein>
    <recommendedName>
        <fullName evidence="1">Sialic acid transporter NanT</fullName>
    </recommendedName>
    <alternativeName>
        <fullName evidence="1">Sialic acid permease</fullName>
    </alternativeName>
    <alternativeName>
        <fullName evidence="1">Sialic acid/H(+) symporter</fullName>
    </alternativeName>
</protein>
<name>NANT_CROS8</name>
<evidence type="ECO:0000255" key="1">
    <source>
        <dbReference type="HAMAP-Rule" id="MF_01238"/>
    </source>
</evidence>
<evidence type="ECO:0000256" key="2">
    <source>
        <dbReference type="SAM" id="MobiDB-lite"/>
    </source>
</evidence>
<proteinExistence type="inferred from homology"/>
<accession>A7MJD1</accession>
<keyword id="KW-0997">Cell inner membrane</keyword>
<keyword id="KW-1003">Cell membrane</keyword>
<keyword id="KW-0472">Membrane</keyword>
<keyword id="KW-1185">Reference proteome</keyword>
<keyword id="KW-0762">Sugar transport</keyword>
<keyword id="KW-0812">Transmembrane</keyword>
<keyword id="KW-1133">Transmembrane helix</keyword>
<keyword id="KW-0813">Transport</keyword>
<feature type="chain" id="PRO_1000214053" description="Sialic acid transporter NanT">
    <location>
        <begin position="1"/>
        <end position="496"/>
    </location>
</feature>
<feature type="transmembrane region" description="Helical" evidence="1">
    <location>
        <begin position="22"/>
        <end position="42"/>
    </location>
</feature>
<feature type="transmembrane region" description="Helical" evidence="1">
    <location>
        <begin position="58"/>
        <end position="78"/>
    </location>
</feature>
<feature type="transmembrane region" description="Helical" evidence="1">
    <location>
        <begin position="86"/>
        <end position="106"/>
    </location>
</feature>
<feature type="transmembrane region" description="Helical" evidence="1">
    <location>
        <begin position="116"/>
        <end position="136"/>
    </location>
</feature>
<feature type="transmembrane region" description="Helical" evidence="1">
    <location>
        <begin position="148"/>
        <end position="168"/>
    </location>
</feature>
<feature type="transmembrane region" description="Helical" evidence="1">
    <location>
        <begin position="170"/>
        <end position="190"/>
    </location>
</feature>
<feature type="transmembrane region" description="Helical" evidence="1">
    <location>
        <begin position="224"/>
        <end position="244"/>
    </location>
</feature>
<feature type="transmembrane region" description="Helical" evidence="1">
    <location>
        <begin position="247"/>
        <end position="267"/>
    </location>
</feature>
<feature type="transmembrane region" description="Helical" evidence="1">
    <location>
        <begin position="278"/>
        <end position="298"/>
    </location>
</feature>
<feature type="transmembrane region" description="Helical" evidence="1">
    <location>
        <begin position="316"/>
        <end position="336"/>
    </location>
</feature>
<feature type="transmembrane region" description="Helical" evidence="1">
    <location>
        <begin position="353"/>
        <end position="375"/>
    </location>
</feature>
<feature type="transmembrane region" description="Helical" evidence="1">
    <location>
        <begin position="406"/>
        <end position="426"/>
    </location>
</feature>
<feature type="transmembrane region" description="Helical" evidence="1">
    <location>
        <begin position="431"/>
        <end position="451"/>
    </location>
</feature>
<feature type="region of interest" description="Disordered" evidence="2">
    <location>
        <begin position="472"/>
        <end position="496"/>
    </location>
</feature>
<feature type="compositionally biased region" description="Basic residues" evidence="2">
    <location>
        <begin position="486"/>
        <end position="496"/>
    </location>
</feature>
<sequence length="496" mass="53695">MTKTTQLIPWYRHLNRAQWRAFSAAWLGYLLDGFDFVLIALVLTEIQDEFGLTTIQAASLISAAFISRWFGGLMLGAMGDRYGRRLAMISSIVLFSVGTLACGLAPGYTTLFIARLVIGIGMAGEYGASATYVIESWPKALRNKASGFLISGFSVGAVVAAFVYSLVVPVWGWRALFFIGILPIVFALWLRKNIPEAHDWEARRSEKTPVRTMVDILYRGEHRVINIVLTLLASVSLWLCFTGELNSAVIVAALGLVCAAIFISFMVQSSGPRWPTGVTLMVIVLFAFLYSWPIQALLPTYLKTELAYEPATVARVLFFSGFGAAVGCCVGGFLGDWLGTRRAYVYSLLASQVLIIPVFAIGGANVWVLGLLLFFQQMLGQGISGILPKLIGGYFDTDQRAAGLGFTYNVGALGGALAPVLGALIAERLHLGAALCSLSFGLTFVVVLLIGLDMPSRVQRWLRPEALRTHDATDGKPLSGAQAVSGRKRGLVKSKS</sequence>